<sequence length="548" mass="62096">MHIGKKNYPNLITSFRMNLKKIILNHDRFSHPERWKTNALLRFTFVYIKFLFDLMIIKNPLRMVGKTYRDAVTALNSLQSNYANIMAIRQTGDRKNTMTLLEMHEWSRRIGYSASDFNKLNIVHITGTKGKGSTAAFTSSILGQYKEQLPRIGLYTSPHLKSVRERIRINGEPISEEKFAKYFFEVWDRLDSTTSSLDKFPHMIPGSKPGYFKFLTLLSFHTFIQEDCKSCVYEVGVGGELDSTNIIEKPIVCGVTLLGIDHTFMLGDTIEEIAWNKGGIFKSGAPAFTVEKQPPQGLTILKERAEERKTTLTEVPSFKQLENVKLGIAGEFQKSNASLAVMLASEILHTSNILEEKIKCSSNASIPEKFIIGLQNTKWEGRCQVLEKGKNVWYIDGAHTKDSMVAASTWFRDTVRLSKRKKILLFNQQSRDANALVNNLYSSVSPEITFDDVIFTTNVTWKSGSYSADLVSMNTSQEDVEKLKVQESLVKNWNKIDDNRAKTHVTASIEEANELIETLYDEPADIFVTGSLHLVGGLLVVFDRIDVK</sequence>
<comment type="function">
    <text evidence="2">Catalyzes conversion of folates to polyglutamate derivatives allowing concentration of folate compounds in the cell and the intracellular retention of these cofactors, which are important substrates for most of the folate-dependent enzymes that are involved in one-carbon transfer reactions involved in purine, pyrimidine and amino acid synthesis. Required for methionine synthesis and maintenance of intact mitochondrial DNA. Involved in telomere maintenance (By similarity).</text>
</comment>
<comment type="catalytic activity">
    <reaction evidence="2">
        <text>(6S)-5,6,7,8-tetrahydrofolyl-(gamma-L-Glu)(n) + L-glutamate + ATP = (6S)-5,6,7,8-tetrahydrofolyl-(gamma-L-Glu)(n+1) + ADP + phosphate + H(+)</text>
        <dbReference type="Rhea" id="RHEA:10580"/>
        <dbReference type="Rhea" id="RHEA-COMP:14738"/>
        <dbReference type="Rhea" id="RHEA-COMP:14740"/>
        <dbReference type="ChEBI" id="CHEBI:15378"/>
        <dbReference type="ChEBI" id="CHEBI:29985"/>
        <dbReference type="ChEBI" id="CHEBI:30616"/>
        <dbReference type="ChEBI" id="CHEBI:43474"/>
        <dbReference type="ChEBI" id="CHEBI:141005"/>
        <dbReference type="ChEBI" id="CHEBI:456216"/>
        <dbReference type="EC" id="6.3.2.17"/>
    </reaction>
</comment>
<comment type="cofactor">
    <cofactor evidence="2">
        <name>a monovalent cation</name>
        <dbReference type="ChEBI" id="CHEBI:60242"/>
    </cofactor>
    <text evidence="2">A monovalent cation.</text>
</comment>
<comment type="pathway">
    <text evidence="2">Cofactor biosynthesis; tetrahydrofolylpolyglutamate biosynthesis.</text>
</comment>
<comment type="subcellular location">
    <subcellularLocation>
        <location evidence="2">Mitochondrion inner membrane</location>
    </subcellularLocation>
    <subcellularLocation>
        <location evidence="2">Mitochondrion matrix</location>
    </subcellularLocation>
    <subcellularLocation>
        <location evidence="2">Cytoplasm</location>
    </subcellularLocation>
</comment>
<comment type="similarity">
    <text evidence="2">Belongs to the folylpolyglutamate synthase family.</text>
</comment>
<comment type="sequence caution" evidence="3">
    <conflict type="erroneous initiation">
        <sequence resource="EMBL-CDS" id="EGA60574"/>
    </conflict>
    <text>Truncated N-terminus.</text>
</comment>
<comment type="sequence caution" evidence="3">
    <conflict type="frameshift">
        <sequence resource="EMBL-CDS" id="EGA60574"/>
    </conflict>
</comment>
<name>FOLE_YEASO</name>
<gene>
    <name evidence="2" type="primary">MET7</name>
    <name type="ORF">FOSTERSO_4228</name>
</gene>
<reference evidence="4" key="1">
    <citation type="journal article" date="2011" name="PLoS Genet.">
        <title>Whole-genome comparison reveals novel genetic elements that characterize the genome of industrial strains of Saccharomyces cerevisiae.</title>
        <authorList>
            <person name="Borneman A.R."/>
            <person name="Desany B.A."/>
            <person name="Riches D."/>
            <person name="Affourtit J.P."/>
            <person name="Forgan A.H."/>
            <person name="Pretorius I.S."/>
            <person name="Egholm M."/>
            <person name="Chambers P.J."/>
        </authorList>
    </citation>
    <scope>NUCLEOTIDE SEQUENCE [LARGE SCALE GENOMIC DNA]</scope>
    <source>
        <strain>FostersO</strain>
    </source>
</reference>
<keyword id="KW-0067">ATP-binding</keyword>
<keyword id="KW-0963">Cytoplasm</keyword>
<keyword id="KW-0436">Ligase</keyword>
<keyword id="KW-0460">Magnesium</keyword>
<keyword id="KW-0472">Membrane</keyword>
<keyword id="KW-0479">Metal-binding</keyword>
<keyword id="KW-0496">Mitochondrion</keyword>
<keyword id="KW-0999">Mitochondrion inner membrane</keyword>
<keyword id="KW-0547">Nucleotide-binding</keyword>
<keyword id="KW-0554">One-carbon metabolism</keyword>
<protein>
    <recommendedName>
        <fullName evidence="2">Folylpolyglutamate synthase</fullName>
        <ecNumber evidence="2">6.3.2.17</ecNumber>
    </recommendedName>
    <alternativeName>
        <fullName evidence="2">Folylpoly-gamma-glutamate synthetase</fullName>
        <shortName evidence="2">FPGS</shortName>
    </alternativeName>
    <alternativeName>
        <fullName evidence="2">Tetrahydrofolylpolyglutamate synthase</fullName>
        <shortName evidence="2">Tetrahydrofolate synthase</shortName>
    </alternativeName>
</protein>
<organism>
    <name type="scientific">Saccharomyces cerevisiae (strain FostersO)</name>
    <name type="common">Baker's yeast</name>
    <dbReference type="NCBI Taxonomy" id="764101"/>
    <lineage>
        <taxon>Eukaryota</taxon>
        <taxon>Fungi</taxon>
        <taxon>Dikarya</taxon>
        <taxon>Ascomycota</taxon>
        <taxon>Saccharomycotina</taxon>
        <taxon>Saccharomycetes</taxon>
        <taxon>Saccharomycetales</taxon>
        <taxon>Saccharomycetaceae</taxon>
        <taxon>Saccharomyces</taxon>
    </lineage>
</organism>
<proteinExistence type="inferred from homology"/>
<evidence type="ECO:0000250" key="1">
    <source>
        <dbReference type="UniProtKB" id="P08192"/>
    </source>
</evidence>
<evidence type="ECO:0000250" key="2">
    <source>
        <dbReference type="UniProtKB" id="Q08645"/>
    </source>
</evidence>
<evidence type="ECO:0000305" key="3"/>
<evidence type="ECO:0000312" key="4">
    <source>
        <dbReference type="EMBL" id="EGA60574.1"/>
    </source>
</evidence>
<accession>E7NMM0</accession>
<dbReference type="EC" id="6.3.2.17" evidence="2"/>
<dbReference type="EMBL" id="AEEZ01000092">
    <property type="protein sequence ID" value="EGA60574.1"/>
    <property type="status" value="ALT_SEQ"/>
    <property type="molecule type" value="Genomic_DNA"/>
</dbReference>
<dbReference type="SMR" id="E7NMM0"/>
<dbReference type="HOGENOM" id="CLU_015869_0_1_1"/>
<dbReference type="OrthoDB" id="19167at4893"/>
<dbReference type="UniPathway" id="UPA00850"/>
<dbReference type="GO" id="GO:0005829">
    <property type="term" value="C:cytosol"/>
    <property type="evidence" value="ECO:0007669"/>
    <property type="project" value="TreeGrafter"/>
</dbReference>
<dbReference type="GO" id="GO:0005743">
    <property type="term" value="C:mitochondrial inner membrane"/>
    <property type="evidence" value="ECO:0007669"/>
    <property type="project" value="UniProtKB-SubCell"/>
</dbReference>
<dbReference type="GO" id="GO:0005759">
    <property type="term" value="C:mitochondrial matrix"/>
    <property type="evidence" value="ECO:0007669"/>
    <property type="project" value="UniProtKB-SubCell"/>
</dbReference>
<dbReference type="GO" id="GO:0005524">
    <property type="term" value="F:ATP binding"/>
    <property type="evidence" value="ECO:0007669"/>
    <property type="project" value="UniProtKB-KW"/>
</dbReference>
<dbReference type="GO" id="GO:0046872">
    <property type="term" value="F:metal ion binding"/>
    <property type="evidence" value="ECO:0007669"/>
    <property type="project" value="UniProtKB-KW"/>
</dbReference>
<dbReference type="GO" id="GO:0004326">
    <property type="term" value="F:tetrahydrofolylpolyglutamate synthase activity"/>
    <property type="evidence" value="ECO:0007669"/>
    <property type="project" value="UniProtKB-EC"/>
</dbReference>
<dbReference type="GO" id="GO:0006730">
    <property type="term" value="P:one-carbon metabolic process"/>
    <property type="evidence" value="ECO:0007669"/>
    <property type="project" value="UniProtKB-KW"/>
</dbReference>
<dbReference type="FunFam" id="3.40.1190.10:FF:000009">
    <property type="entry name" value="Folylpolyglutamate synthase"/>
    <property type="match status" value="1"/>
</dbReference>
<dbReference type="FunFam" id="3.90.190.20:FF:000009">
    <property type="entry name" value="Folylpolyglutamate synthase"/>
    <property type="match status" value="1"/>
</dbReference>
<dbReference type="Gene3D" id="3.90.190.20">
    <property type="entry name" value="Mur ligase, C-terminal domain"/>
    <property type="match status" value="1"/>
</dbReference>
<dbReference type="Gene3D" id="3.40.1190.10">
    <property type="entry name" value="Mur-like, catalytic domain"/>
    <property type="match status" value="1"/>
</dbReference>
<dbReference type="InterPro" id="IPR001645">
    <property type="entry name" value="Folylpolyglutamate_synth"/>
</dbReference>
<dbReference type="InterPro" id="IPR018109">
    <property type="entry name" value="Folylpolyglutamate_synth_CS"/>
</dbReference>
<dbReference type="InterPro" id="IPR023600">
    <property type="entry name" value="Folylpolyglutamate_synth_euk"/>
</dbReference>
<dbReference type="InterPro" id="IPR036565">
    <property type="entry name" value="Mur-like_cat_sf"/>
</dbReference>
<dbReference type="InterPro" id="IPR036615">
    <property type="entry name" value="Mur_ligase_C_dom_sf"/>
</dbReference>
<dbReference type="NCBIfam" id="TIGR01499">
    <property type="entry name" value="folC"/>
    <property type="match status" value="1"/>
</dbReference>
<dbReference type="PANTHER" id="PTHR11136:SF5">
    <property type="entry name" value="FOLYLPOLYGLUTAMATE SYNTHASE, MITOCHONDRIAL"/>
    <property type="match status" value="1"/>
</dbReference>
<dbReference type="PANTHER" id="PTHR11136">
    <property type="entry name" value="FOLYLPOLYGLUTAMATE SYNTHASE-RELATED"/>
    <property type="match status" value="1"/>
</dbReference>
<dbReference type="PIRSF" id="PIRSF038895">
    <property type="entry name" value="FPGS"/>
    <property type="match status" value="1"/>
</dbReference>
<dbReference type="SUPFAM" id="SSF53623">
    <property type="entry name" value="MurD-like peptide ligases, catalytic domain"/>
    <property type="match status" value="1"/>
</dbReference>
<dbReference type="SUPFAM" id="SSF53244">
    <property type="entry name" value="MurD-like peptide ligases, peptide-binding domain"/>
    <property type="match status" value="1"/>
</dbReference>
<dbReference type="PROSITE" id="PS01011">
    <property type="entry name" value="FOLYLPOLYGLU_SYNT_1"/>
    <property type="match status" value="1"/>
</dbReference>
<dbReference type="PROSITE" id="PS01012">
    <property type="entry name" value="FOLYLPOLYGLU_SYNT_2"/>
    <property type="match status" value="1"/>
</dbReference>
<feature type="chain" id="PRO_0000414491" description="Folylpolyglutamate synthase">
    <location>
        <begin position="1"/>
        <end position="548"/>
    </location>
</feature>
<feature type="binding site" evidence="1">
    <location>
        <begin position="130"/>
        <end position="133"/>
    </location>
    <ligand>
        <name>ATP</name>
        <dbReference type="ChEBI" id="CHEBI:30616"/>
    </ligand>
</feature>
<feature type="binding site" evidence="1">
    <location>
        <position position="157"/>
    </location>
    <ligand>
        <name>Mg(2+)</name>
        <dbReference type="ChEBI" id="CHEBI:18420"/>
        <label>1</label>
    </ligand>
</feature>
<feature type="binding site" evidence="1">
    <location>
        <position position="234"/>
    </location>
    <ligand>
        <name>Mg(2+)</name>
        <dbReference type="ChEBI" id="CHEBI:18420"/>
        <label>1</label>
    </ligand>
</feature>
<feature type="binding site" evidence="1">
    <location>
        <position position="262"/>
    </location>
    <ligand>
        <name>Mg(2+)</name>
        <dbReference type="ChEBI" id="CHEBI:18420"/>
        <label>2</label>
    </ligand>
</feature>
<feature type="binding site" evidence="1">
    <location>
        <position position="382"/>
    </location>
    <ligand>
        <name>ATP</name>
        <dbReference type="ChEBI" id="CHEBI:30616"/>
    </ligand>
</feature>
<feature type="binding site" evidence="1">
    <location>
        <position position="396"/>
    </location>
    <ligand>
        <name>ATP</name>
        <dbReference type="ChEBI" id="CHEBI:30616"/>
    </ligand>
</feature>